<sequence length="131" mass="15652">MERQPARTLWYDRPKYVFMEFCVEDSTDVSVLIEDHRVVFSCRNGDGVELYNEIEFYAKVNSKDSQDKRSGRSITCFVRKWKEKVAWPRLTKEDIKPVWLSVDFDNWRDWEGDDEVELAQVEHYAEDDSDS</sequence>
<keyword id="KW-0025">Alternative splicing</keyword>
<keyword id="KW-1185">Reference proteome</keyword>
<feature type="chain" id="PRO_0000418441" description="Putative protein PTGES3L">
    <location>
        <begin position="1"/>
        <end position="131"/>
    </location>
</feature>
<feature type="domain" description="CS" evidence="1">
    <location>
        <begin position="3"/>
        <end position="91"/>
    </location>
</feature>
<feature type="splice variant" id="VSP_044056" description="In isoform 2." evidence="2">
    <original>DDSDS</original>
    <variation>MHTSHSTHEEIRRL</variation>
    <location>
        <begin position="127"/>
        <end position="131"/>
    </location>
</feature>
<gene>
    <name type="primary">Ptges3l</name>
</gene>
<proteinExistence type="evidence at transcript level"/>
<protein>
    <recommendedName>
        <fullName>Putative protein PTGES3L</fullName>
    </recommendedName>
    <alternativeName>
        <fullName>Prostaglandin E synthase 3-like</fullName>
    </alternativeName>
</protein>
<dbReference type="EMBL" id="AK004415">
    <property type="protein sequence ID" value="BAB23297.1"/>
    <property type="molecule type" value="mRNA"/>
</dbReference>
<dbReference type="EMBL" id="AK007198">
    <property type="protein sequence ID" value="BAB24896.1"/>
    <property type="molecule type" value="mRNA"/>
</dbReference>
<dbReference type="EMBL" id="AL590996">
    <property type="status" value="NOT_ANNOTATED_CDS"/>
    <property type="molecule type" value="Genomic_DNA"/>
</dbReference>
<dbReference type="EMBL" id="AL732315">
    <property type="status" value="NOT_ANNOTATED_CDS"/>
    <property type="molecule type" value="Genomic_DNA"/>
</dbReference>
<dbReference type="EMBL" id="CH466558">
    <property type="protein sequence ID" value="EDL34040.1"/>
    <property type="molecule type" value="Genomic_DNA"/>
</dbReference>
<dbReference type="EMBL" id="CH466558">
    <property type="protein sequence ID" value="EDL34041.1"/>
    <property type="molecule type" value="Genomic_DNA"/>
</dbReference>
<dbReference type="CCDS" id="CCDS25468.1">
    <molecule id="Q9D9A7-1"/>
</dbReference>
<dbReference type="RefSeq" id="NP_081141.1">
    <molecule id="Q9D9A7-1"/>
    <property type="nucleotide sequence ID" value="NM_026865.3"/>
</dbReference>
<dbReference type="SMR" id="Q9D9A7"/>
<dbReference type="FunCoup" id="Q9D9A7">
    <property type="interactions" value="2349"/>
</dbReference>
<dbReference type="STRING" id="10090.ENSMUSP00000099391"/>
<dbReference type="PhosphoSitePlus" id="Q9D9A7"/>
<dbReference type="PaxDb" id="10090-ENSMUSP00000099391"/>
<dbReference type="ProteomicsDB" id="291584">
    <molecule id="Q9D9A7-1"/>
</dbReference>
<dbReference type="ProteomicsDB" id="291585">
    <molecule id="Q9D9A7-2"/>
</dbReference>
<dbReference type="Pumba" id="Q9D9A7"/>
<dbReference type="Antibodypedia" id="71718">
    <property type="antibodies" value="14 antibodies from 4 providers"/>
</dbReference>
<dbReference type="DNASU" id="73635"/>
<dbReference type="Ensembl" id="ENSMUST00000093933.11">
    <molecule id="Q9D9A7-2"/>
    <property type="protein sequence ID" value="ENSMUSP00000091465.5"/>
    <property type="gene ID" value="ENSMUSG00000097487.8"/>
</dbReference>
<dbReference type="Ensembl" id="ENSMUST00000103102.10">
    <molecule id="Q9D9A7-1"/>
    <property type="protein sequence ID" value="ENSMUSP00000099391.4"/>
    <property type="gene ID" value="ENSMUSG00000097487.8"/>
</dbReference>
<dbReference type="GeneID" id="73635"/>
<dbReference type="KEGG" id="mmu:73635"/>
<dbReference type="UCSC" id="uc007lot.1">
    <molecule id="Q9D9A7-1"/>
    <property type="organism name" value="mouse"/>
</dbReference>
<dbReference type="AGR" id="MGI:1916146"/>
<dbReference type="CTD" id="100885848"/>
<dbReference type="MGI" id="MGI:1916146">
    <property type="gene designation" value="Ptges3l"/>
</dbReference>
<dbReference type="VEuPathDB" id="HostDB:ENSMUSG00000097487"/>
<dbReference type="eggNOG" id="KOG3158">
    <property type="taxonomic scope" value="Eukaryota"/>
</dbReference>
<dbReference type="GeneTree" id="ENSGT00940000163448"/>
<dbReference type="HOGENOM" id="CLU_078883_1_0_1"/>
<dbReference type="InParanoid" id="Q9D9A7"/>
<dbReference type="BioGRID-ORCS" id="73635">
    <property type="hits" value="2 hits in 44 CRISPR screens"/>
</dbReference>
<dbReference type="ChiTaRS" id="Ptges3l">
    <property type="organism name" value="mouse"/>
</dbReference>
<dbReference type="PRO" id="PR:Q9D9A7"/>
<dbReference type="Proteomes" id="UP000000589">
    <property type="component" value="Chromosome 11"/>
</dbReference>
<dbReference type="RNAct" id="Q9D9A7">
    <property type="molecule type" value="protein"/>
</dbReference>
<dbReference type="Bgee" id="ENSMUSG00000097487">
    <property type="expression patterns" value="Expressed in hindlimb stylopod muscle and 108 other cell types or tissues"/>
</dbReference>
<dbReference type="ExpressionAtlas" id="Q9D9A7">
    <property type="expression patterns" value="baseline and differential"/>
</dbReference>
<dbReference type="GO" id="GO:0051879">
    <property type="term" value="F:Hsp90 protein binding"/>
    <property type="evidence" value="ECO:0007669"/>
    <property type="project" value="InterPro"/>
</dbReference>
<dbReference type="CDD" id="cd00237">
    <property type="entry name" value="p23"/>
    <property type="match status" value="1"/>
</dbReference>
<dbReference type="FunFam" id="2.60.40.790:FF:000003">
    <property type="entry name" value="prostaglandin E synthase 3"/>
    <property type="match status" value="1"/>
</dbReference>
<dbReference type="Gene3D" id="2.60.40.790">
    <property type="match status" value="1"/>
</dbReference>
<dbReference type="InterPro" id="IPR007052">
    <property type="entry name" value="CS_dom"/>
</dbReference>
<dbReference type="InterPro" id="IPR008978">
    <property type="entry name" value="HSP20-like_chaperone"/>
</dbReference>
<dbReference type="InterPro" id="IPR045250">
    <property type="entry name" value="p23-like"/>
</dbReference>
<dbReference type="PANTHER" id="PTHR22932:SF4">
    <property type="entry name" value="PROTEIN PTGES3L-RELATED"/>
    <property type="match status" value="1"/>
</dbReference>
<dbReference type="PANTHER" id="PTHR22932">
    <property type="entry name" value="TELOMERASE-BINDING PROTEIN P23 HSP90 CO-CHAPERONE"/>
    <property type="match status" value="1"/>
</dbReference>
<dbReference type="SUPFAM" id="SSF49764">
    <property type="entry name" value="HSP20-like chaperones"/>
    <property type="match status" value="1"/>
</dbReference>
<dbReference type="PROSITE" id="PS51203">
    <property type="entry name" value="CS"/>
    <property type="match status" value="1"/>
</dbReference>
<name>PTG3L_MOUSE</name>
<organism>
    <name type="scientific">Mus musculus</name>
    <name type="common">Mouse</name>
    <dbReference type="NCBI Taxonomy" id="10090"/>
    <lineage>
        <taxon>Eukaryota</taxon>
        <taxon>Metazoa</taxon>
        <taxon>Chordata</taxon>
        <taxon>Craniata</taxon>
        <taxon>Vertebrata</taxon>
        <taxon>Euteleostomi</taxon>
        <taxon>Mammalia</taxon>
        <taxon>Eutheria</taxon>
        <taxon>Euarchontoglires</taxon>
        <taxon>Glires</taxon>
        <taxon>Rodentia</taxon>
        <taxon>Myomorpha</taxon>
        <taxon>Muroidea</taxon>
        <taxon>Muridae</taxon>
        <taxon>Murinae</taxon>
        <taxon>Mus</taxon>
        <taxon>Mus</taxon>
    </lineage>
</organism>
<reference key="1">
    <citation type="journal article" date="2005" name="Science">
        <title>The transcriptional landscape of the mammalian genome.</title>
        <authorList>
            <person name="Carninci P."/>
            <person name="Kasukawa T."/>
            <person name="Katayama S."/>
            <person name="Gough J."/>
            <person name="Frith M.C."/>
            <person name="Maeda N."/>
            <person name="Oyama R."/>
            <person name="Ravasi T."/>
            <person name="Lenhard B."/>
            <person name="Wells C."/>
            <person name="Kodzius R."/>
            <person name="Shimokawa K."/>
            <person name="Bajic V.B."/>
            <person name="Brenner S.E."/>
            <person name="Batalov S."/>
            <person name="Forrest A.R."/>
            <person name="Zavolan M."/>
            <person name="Davis M.J."/>
            <person name="Wilming L.G."/>
            <person name="Aidinis V."/>
            <person name="Allen J.E."/>
            <person name="Ambesi-Impiombato A."/>
            <person name="Apweiler R."/>
            <person name="Aturaliya R.N."/>
            <person name="Bailey T.L."/>
            <person name="Bansal M."/>
            <person name="Baxter L."/>
            <person name="Beisel K.W."/>
            <person name="Bersano T."/>
            <person name="Bono H."/>
            <person name="Chalk A.M."/>
            <person name="Chiu K.P."/>
            <person name="Choudhary V."/>
            <person name="Christoffels A."/>
            <person name="Clutterbuck D.R."/>
            <person name="Crowe M.L."/>
            <person name="Dalla E."/>
            <person name="Dalrymple B.P."/>
            <person name="de Bono B."/>
            <person name="Della Gatta G."/>
            <person name="di Bernardo D."/>
            <person name="Down T."/>
            <person name="Engstrom P."/>
            <person name="Fagiolini M."/>
            <person name="Faulkner G."/>
            <person name="Fletcher C.F."/>
            <person name="Fukushima T."/>
            <person name="Furuno M."/>
            <person name="Futaki S."/>
            <person name="Gariboldi M."/>
            <person name="Georgii-Hemming P."/>
            <person name="Gingeras T.R."/>
            <person name="Gojobori T."/>
            <person name="Green R.E."/>
            <person name="Gustincich S."/>
            <person name="Harbers M."/>
            <person name="Hayashi Y."/>
            <person name="Hensch T.K."/>
            <person name="Hirokawa N."/>
            <person name="Hill D."/>
            <person name="Huminiecki L."/>
            <person name="Iacono M."/>
            <person name="Ikeo K."/>
            <person name="Iwama A."/>
            <person name="Ishikawa T."/>
            <person name="Jakt M."/>
            <person name="Kanapin A."/>
            <person name="Katoh M."/>
            <person name="Kawasawa Y."/>
            <person name="Kelso J."/>
            <person name="Kitamura H."/>
            <person name="Kitano H."/>
            <person name="Kollias G."/>
            <person name="Krishnan S.P."/>
            <person name="Kruger A."/>
            <person name="Kummerfeld S.K."/>
            <person name="Kurochkin I.V."/>
            <person name="Lareau L.F."/>
            <person name="Lazarevic D."/>
            <person name="Lipovich L."/>
            <person name="Liu J."/>
            <person name="Liuni S."/>
            <person name="McWilliam S."/>
            <person name="Madan Babu M."/>
            <person name="Madera M."/>
            <person name="Marchionni L."/>
            <person name="Matsuda H."/>
            <person name="Matsuzawa S."/>
            <person name="Miki H."/>
            <person name="Mignone F."/>
            <person name="Miyake S."/>
            <person name="Morris K."/>
            <person name="Mottagui-Tabar S."/>
            <person name="Mulder N."/>
            <person name="Nakano N."/>
            <person name="Nakauchi H."/>
            <person name="Ng P."/>
            <person name="Nilsson R."/>
            <person name="Nishiguchi S."/>
            <person name="Nishikawa S."/>
            <person name="Nori F."/>
            <person name="Ohara O."/>
            <person name="Okazaki Y."/>
            <person name="Orlando V."/>
            <person name="Pang K.C."/>
            <person name="Pavan W.J."/>
            <person name="Pavesi G."/>
            <person name="Pesole G."/>
            <person name="Petrovsky N."/>
            <person name="Piazza S."/>
            <person name="Reed J."/>
            <person name="Reid J.F."/>
            <person name="Ring B.Z."/>
            <person name="Ringwald M."/>
            <person name="Rost B."/>
            <person name="Ruan Y."/>
            <person name="Salzberg S.L."/>
            <person name="Sandelin A."/>
            <person name="Schneider C."/>
            <person name="Schoenbach C."/>
            <person name="Sekiguchi K."/>
            <person name="Semple C.A."/>
            <person name="Seno S."/>
            <person name="Sessa L."/>
            <person name="Sheng Y."/>
            <person name="Shibata Y."/>
            <person name="Shimada H."/>
            <person name="Shimada K."/>
            <person name="Silva D."/>
            <person name="Sinclair B."/>
            <person name="Sperling S."/>
            <person name="Stupka E."/>
            <person name="Sugiura K."/>
            <person name="Sultana R."/>
            <person name="Takenaka Y."/>
            <person name="Taki K."/>
            <person name="Tammoja K."/>
            <person name="Tan S.L."/>
            <person name="Tang S."/>
            <person name="Taylor M.S."/>
            <person name="Tegner J."/>
            <person name="Teichmann S.A."/>
            <person name="Ueda H.R."/>
            <person name="van Nimwegen E."/>
            <person name="Verardo R."/>
            <person name="Wei C.L."/>
            <person name="Yagi K."/>
            <person name="Yamanishi H."/>
            <person name="Zabarovsky E."/>
            <person name="Zhu S."/>
            <person name="Zimmer A."/>
            <person name="Hide W."/>
            <person name="Bult C."/>
            <person name="Grimmond S.M."/>
            <person name="Teasdale R.D."/>
            <person name="Liu E.T."/>
            <person name="Brusic V."/>
            <person name="Quackenbush J."/>
            <person name="Wahlestedt C."/>
            <person name="Mattick J.S."/>
            <person name="Hume D.A."/>
            <person name="Kai C."/>
            <person name="Sasaki D."/>
            <person name="Tomaru Y."/>
            <person name="Fukuda S."/>
            <person name="Kanamori-Katayama M."/>
            <person name="Suzuki M."/>
            <person name="Aoki J."/>
            <person name="Arakawa T."/>
            <person name="Iida J."/>
            <person name="Imamura K."/>
            <person name="Itoh M."/>
            <person name="Kato T."/>
            <person name="Kawaji H."/>
            <person name="Kawagashira N."/>
            <person name="Kawashima T."/>
            <person name="Kojima M."/>
            <person name="Kondo S."/>
            <person name="Konno H."/>
            <person name="Nakano K."/>
            <person name="Ninomiya N."/>
            <person name="Nishio T."/>
            <person name="Okada M."/>
            <person name="Plessy C."/>
            <person name="Shibata K."/>
            <person name="Shiraki T."/>
            <person name="Suzuki S."/>
            <person name="Tagami M."/>
            <person name="Waki K."/>
            <person name="Watahiki A."/>
            <person name="Okamura-Oho Y."/>
            <person name="Suzuki H."/>
            <person name="Kawai J."/>
            <person name="Hayashizaki Y."/>
        </authorList>
    </citation>
    <scope>NUCLEOTIDE SEQUENCE [LARGE SCALE MRNA] (ISOFORMS 1 AND 2)</scope>
    <source>
        <strain>C57BL/6J</strain>
        <tissue>Embryo</tissue>
        <tissue>Testis</tissue>
    </source>
</reference>
<reference key="2">
    <citation type="journal article" date="2009" name="PLoS Biol.">
        <title>Lineage-specific biology revealed by a finished genome assembly of the mouse.</title>
        <authorList>
            <person name="Church D.M."/>
            <person name="Goodstadt L."/>
            <person name="Hillier L.W."/>
            <person name="Zody M.C."/>
            <person name="Goldstein S."/>
            <person name="She X."/>
            <person name="Bult C.J."/>
            <person name="Agarwala R."/>
            <person name="Cherry J.L."/>
            <person name="DiCuccio M."/>
            <person name="Hlavina W."/>
            <person name="Kapustin Y."/>
            <person name="Meric P."/>
            <person name="Maglott D."/>
            <person name="Birtle Z."/>
            <person name="Marques A.C."/>
            <person name="Graves T."/>
            <person name="Zhou S."/>
            <person name="Teague B."/>
            <person name="Potamousis K."/>
            <person name="Churas C."/>
            <person name="Place M."/>
            <person name="Herschleb J."/>
            <person name="Runnheim R."/>
            <person name="Forrest D."/>
            <person name="Amos-Landgraf J."/>
            <person name="Schwartz D.C."/>
            <person name="Cheng Z."/>
            <person name="Lindblad-Toh K."/>
            <person name="Eichler E.E."/>
            <person name="Ponting C.P."/>
        </authorList>
    </citation>
    <scope>NUCLEOTIDE SEQUENCE [LARGE SCALE GENOMIC DNA]</scope>
    <source>
        <strain>C57BL/6J</strain>
    </source>
</reference>
<reference key="3">
    <citation type="submission" date="2005-07" db="EMBL/GenBank/DDBJ databases">
        <authorList>
            <person name="Mural R.J."/>
            <person name="Adams M.D."/>
            <person name="Myers E.W."/>
            <person name="Smith H.O."/>
            <person name="Venter J.C."/>
        </authorList>
    </citation>
    <scope>NUCLEOTIDE SEQUENCE [LARGE SCALE GENOMIC DNA]</scope>
</reference>
<accession>Q9D9A7</accession>
<accession>Q9D0U4</accession>
<evidence type="ECO:0000255" key="1">
    <source>
        <dbReference type="PROSITE-ProRule" id="PRU00547"/>
    </source>
</evidence>
<evidence type="ECO:0000303" key="2">
    <source>
    </source>
</evidence>
<evidence type="ECO:0000305" key="3"/>
<comment type="alternative products">
    <event type="alternative splicing"/>
    <isoform>
        <id>Q9D9A7-1</id>
        <name>1</name>
        <sequence type="displayed"/>
    </isoform>
    <isoform>
        <id>Q9D9A7-2</id>
        <name>2</name>
        <sequence type="described" ref="VSP_044056"/>
    </isoform>
</comment>
<comment type="similarity">
    <text evidence="3">Belongs to the p23/wos2 family.</text>
</comment>